<dbReference type="EMBL" id="CP000439">
    <property type="protein sequence ID" value="ABK89137.1"/>
    <property type="molecule type" value="Genomic_DNA"/>
</dbReference>
<dbReference type="RefSeq" id="WP_003017693.1">
    <property type="nucleotide sequence ID" value="NZ_CP009633.1"/>
</dbReference>
<dbReference type="SMR" id="A0Q4H2"/>
<dbReference type="KEGG" id="ftn:FTN_0228"/>
<dbReference type="KEGG" id="ftx:AW25_1814"/>
<dbReference type="BioCyc" id="FTUL401614:G1G75-239-MONOMER"/>
<dbReference type="Proteomes" id="UP000000762">
    <property type="component" value="Chromosome"/>
</dbReference>
<dbReference type="GO" id="GO:0005737">
    <property type="term" value="C:cytoplasm"/>
    <property type="evidence" value="ECO:0007669"/>
    <property type="project" value="UniProtKB-SubCell"/>
</dbReference>
<dbReference type="GO" id="GO:0003746">
    <property type="term" value="F:translation elongation factor activity"/>
    <property type="evidence" value="ECO:0007669"/>
    <property type="project" value="UniProtKB-UniRule"/>
</dbReference>
<dbReference type="CDD" id="cd14275">
    <property type="entry name" value="UBA_EF-Ts"/>
    <property type="match status" value="1"/>
</dbReference>
<dbReference type="FunFam" id="1.10.286.20:FF:000001">
    <property type="entry name" value="Elongation factor Ts"/>
    <property type="match status" value="1"/>
</dbReference>
<dbReference type="FunFam" id="1.10.8.10:FF:000001">
    <property type="entry name" value="Elongation factor Ts"/>
    <property type="match status" value="1"/>
</dbReference>
<dbReference type="Gene3D" id="1.10.286.20">
    <property type="match status" value="1"/>
</dbReference>
<dbReference type="Gene3D" id="1.10.8.10">
    <property type="entry name" value="DNA helicase RuvA subunit, C-terminal domain"/>
    <property type="match status" value="1"/>
</dbReference>
<dbReference type="Gene3D" id="3.30.479.20">
    <property type="entry name" value="Elongation factor Ts, dimerisation domain"/>
    <property type="match status" value="2"/>
</dbReference>
<dbReference type="HAMAP" id="MF_00050">
    <property type="entry name" value="EF_Ts"/>
    <property type="match status" value="1"/>
</dbReference>
<dbReference type="InterPro" id="IPR036402">
    <property type="entry name" value="EF-Ts_dimer_sf"/>
</dbReference>
<dbReference type="InterPro" id="IPR001816">
    <property type="entry name" value="Transl_elong_EFTs/EF1B"/>
</dbReference>
<dbReference type="InterPro" id="IPR014039">
    <property type="entry name" value="Transl_elong_EFTs/EF1B_dimer"/>
</dbReference>
<dbReference type="InterPro" id="IPR018101">
    <property type="entry name" value="Transl_elong_Ts_CS"/>
</dbReference>
<dbReference type="InterPro" id="IPR009060">
    <property type="entry name" value="UBA-like_sf"/>
</dbReference>
<dbReference type="NCBIfam" id="TIGR00116">
    <property type="entry name" value="tsf"/>
    <property type="match status" value="1"/>
</dbReference>
<dbReference type="PANTHER" id="PTHR11741">
    <property type="entry name" value="ELONGATION FACTOR TS"/>
    <property type="match status" value="1"/>
</dbReference>
<dbReference type="PANTHER" id="PTHR11741:SF0">
    <property type="entry name" value="ELONGATION FACTOR TS, MITOCHONDRIAL"/>
    <property type="match status" value="1"/>
</dbReference>
<dbReference type="Pfam" id="PF00889">
    <property type="entry name" value="EF_TS"/>
    <property type="match status" value="1"/>
</dbReference>
<dbReference type="SUPFAM" id="SSF54713">
    <property type="entry name" value="Elongation factor Ts (EF-Ts), dimerisation domain"/>
    <property type="match status" value="2"/>
</dbReference>
<dbReference type="SUPFAM" id="SSF46934">
    <property type="entry name" value="UBA-like"/>
    <property type="match status" value="1"/>
</dbReference>
<dbReference type="PROSITE" id="PS01126">
    <property type="entry name" value="EF_TS_1"/>
    <property type="match status" value="1"/>
</dbReference>
<dbReference type="PROSITE" id="PS01127">
    <property type="entry name" value="EF_TS_2"/>
    <property type="match status" value="1"/>
</dbReference>
<feature type="chain" id="PRO_1000006096" description="Elongation factor Ts">
    <location>
        <begin position="1"/>
        <end position="289"/>
    </location>
</feature>
<feature type="region of interest" description="Involved in Mg(2+) ion dislocation from EF-Tu" evidence="1">
    <location>
        <begin position="80"/>
        <end position="83"/>
    </location>
</feature>
<gene>
    <name evidence="1" type="primary">tsf</name>
    <name type="ordered locus">FTN_0228</name>
</gene>
<comment type="function">
    <text evidence="1">Associates with the EF-Tu.GDP complex and induces the exchange of GDP to GTP. It remains bound to the aminoacyl-tRNA.EF-Tu.GTP complex up to the GTP hydrolysis stage on the ribosome.</text>
</comment>
<comment type="subcellular location">
    <subcellularLocation>
        <location evidence="1">Cytoplasm</location>
    </subcellularLocation>
</comment>
<comment type="similarity">
    <text evidence="1">Belongs to the EF-Ts family.</text>
</comment>
<reference key="1">
    <citation type="journal article" date="2007" name="Genome Biol.">
        <title>Comparison of Francisella tularensis genomes reveals evolutionary events associated with the emergence of human pathogenic strains.</title>
        <authorList>
            <person name="Rohmer L."/>
            <person name="Fong C."/>
            <person name="Abmayr S."/>
            <person name="Wasnick M."/>
            <person name="Larson Freeman T.J."/>
            <person name="Radey M."/>
            <person name="Guina T."/>
            <person name="Svensson K."/>
            <person name="Hayden H.S."/>
            <person name="Jacobs M."/>
            <person name="Gallagher L.A."/>
            <person name="Manoil C."/>
            <person name="Ernst R.K."/>
            <person name="Drees B."/>
            <person name="Buckley D."/>
            <person name="Haugen E."/>
            <person name="Bovee D."/>
            <person name="Zhou Y."/>
            <person name="Chang J."/>
            <person name="Levy R."/>
            <person name="Lim R."/>
            <person name="Gillett W."/>
            <person name="Guenthener D."/>
            <person name="Kang A."/>
            <person name="Shaffer S.A."/>
            <person name="Taylor G."/>
            <person name="Chen J."/>
            <person name="Gallis B."/>
            <person name="D'Argenio D.A."/>
            <person name="Forsman M."/>
            <person name="Olson M.V."/>
            <person name="Goodlett D.R."/>
            <person name="Kaul R."/>
            <person name="Miller S.I."/>
            <person name="Brittnacher M.J."/>
        </authorList>
    </citation>
    <scope>NUCLEOTIDE SEQUENCE [LARGE SCALE GENOMIC DNA]</scope>
    <source>
        <strain>U112</strain>
    </source>
</reference>
<evidence type="ECO:0000255" key="1">
    <source>
        <dbReference type="HAMAP-Rule" id="MF_00050"/>
    </source>
</evidence>
<sequence length="289" mass="30960">MSNISAKLVKELRERTGAGMMECKKALVAAAGDIEKAAEEMRISGQAKADKKASRVAAEGVIEVYAADGRAILLEINSETDFVARDETFKKFAQEAVKAAHAANAKTIEEVLAAKTSNGETVEEARKSLIAKIGENIQVRRVKTVEAETLGAYIHGSKIGVVAALEGGDEDLAKDVAMHVAAANPMVVSGDQVPADVVAKEKEIFTAQAKESGKPAEIIEKMIVGRIRKFLDEVALLGQDFVKDPAIKVEKLVKDKGAKVVNFIRLDVGEGIEKKEEDFAAEVMSQIKG</sequence>
<keyword id="KW-0963">Cytoplasm</keyword>
<keyword id="KW-0251">Elongation factor</keyword>
<keyword id="KW-0648">Protein biosynthesis</keyword>
<proteinExistence type="inferred from homology"/>
<accession>A0Q4H2</accession>
<organism>
    <name type="scientific">Francisella tularensis subsp. novicida (strain U112)</name>
    <dbReference type="NCBI Taxonomy" id="401614"/>
    <lineage>
        <taxon>Bacteria</taxon>
        <taxon>Pseudomonadati</taxon>
        <taxon>Pseudomonadota</taxon>
        <taxon>Gammaproteobacteria</taxon>
        <taxon>Thiotrichales</taxon>
        <taxon>Francisellaceae</taxon>
        <taxon>Francisella</taxon>
    </lineage>
</organism>
<protein>
    <recommendedName>
        <fullName evidence="1">Elongation factor Ts</fullName>
        <shortName evidence="1">EF-Ts</shortName>
    </recommendedName>
</protein>
<name>EFTS_FRATN</name>